<comment type="function">
    <text evidence="1">Endonuclease that specifically degrades the RNA of RNA-DNA hybrids.</text>
</comment>
<comment type="catalytic activity">
    <reaction evidence="1">
        <text>Endonucleolytic cleavage to 5'-phosphomonoester.</text>
        <dbReference type="EC" id="3.1.26.4"/>
    </reaction>
</comment>
<comment type="cofactor">
    <cofactor evidence="1">
        <name>Mg(2+)</name>
        <dbReference type="ChEBI" id="CHEBI:18420"/>
    </cofactor>
    <text evidence="1">Binds 1 Mg(2+) ion per subunit. May bind a second metal ion at a regulatory site, or after substrate binding.</text>
</comment>
<comment type="subunit">
    <text evidence="1">Monomer.</text>
</comment>
<comment type="subcellular location">
    <subcellularLocation>
        <location evidence="1">Cytoplasm</location>
    </subcellularLocation>
</comment>
<comment type="similarity">
    <text evidence="1">Belongs to the RNase H family.</text>
</comment>
<keyword id="KW-0963">Cytoplasm</keyword>
<keyword id="KW-0255">Endonuclease</keyword>
<keyword id="KW-0378">Hydrolase</keyword>
<keyword id="KW-0460">Magnesium</keyword>
<keyword id="KW-0479">Metal-binding</keyword>
<keyword id="KW-0540">Nuclease</keyword>
<dbReference type="EC" id="3.1.26.4" evidence="1"/>
<dbReference type="EMBL" id="AP009179">
    <property type="protein sequence ID" value="BAF73198.1"/>
    <property type="molecule type" value="Genomic_DNA"/>
</dbReference>
<dbReference type="RefSeq" id="WP_012084036.1">
    <property type="nucleotide sequence ID" value="NC_009663.1"/>
</dbReference>
<dbReference type="SMR" id="A6QCI9"/>
<dbReference type="STRING" id="387093.SUN_2258"/>
<dbReference type="KEGG" id="sun:SUN_2258"/>
<dbReference type="eggNOG" id="COG0328">
    <property type="taxonomic scope" value="Bacteria"/>
</dbReference>
<dbReference type="HOGENOM" id="CLU_030894_6_2_7"/>
<dbReference type="OrthoDB" id="7845843at2"/>
<dbReference type="Proteomes" id="UP000006378">
    <property type="component" value="Chromosome"/>
</dbReference>
<dbReference type="GO" id="GO:0005737">
    <property type="term" value="C:cytoplasm"/>
    <property type="evidence" value="ECO:0007669"/>
    <property type="project" value="UniProtKB-SubCell"/>
</dbReference>
<dbReference type="GO" id="GO:0000287">
    <property type="term" value="F:magnesium ion binding"/>
    <property type="evidence" value="ECO:0007669"/>
    <property type="project" value="UniProtKB-UniRule"/>
</dbReference>
<dbReference type="GO" id="GO:0003676">
    <property type="term" value="F:nucleic acid binding"/>
    <property type="evidence" value="ECO:0007669"/>
    <property type="project" value="InterPro"/>
</dbReference>
<dbReference type="GO" id="GO:0004523">
    <property type="term" value="F:RNA-DNA hybrid ribonuclease activity"/>
    <property type="evidence" value="ECO:0007669"/>
    <property type="project" value="UniProtKB-UniRule"/>
</dbReference>
<dbReference type="GO" id="GO:0043137">
    <property type="term" value="P:DNA replication, removal of RNA primer"/>
    <property type="evidence" value="ECO:0007669"/>
    <property type="project" value="TreeGrafter"/>
</dbReference>
<dbReference type="CDD" id="cd09278">
    <property type="entry name" value="RNase_HI_prokaryote_like"/>
    <property type="match status" value="1"/>
</dbReference>
<dbReference type="Gene3D" id="3.30.420.10">
    <property type="entry name" value="Ribonuclease H-like superfamily/Ribonuclease H"/>
    <property type="match status" value="1"/>
</dbReference>
<dbReference type="HAMAP" id="MF_00042">
    <property type="entry name" value="RNase_H"/>
    <property type="match status" value="1"/>
</dbReference>
<dbReference type="InterPro" id="IPR050092">
    <property type="entry name" value="RNase_H"/>
</dbReference>
<dbReference type="InterPro" id="IPR012337">
    <property type="entry name" value="RNaseH-like_sf"/>
</dbReference>
<dbReference type="InterPro" id="IPR002156">
    <property type="entry name" value="RNaseH_domain"/>
</dbReference>
<dbReference type="InterPro" id="IPR036397">
    <property type="entry name" value="RNaseH_sf"/>
</dbReference>
<dbReference type="InterPro" id="IPR022892">
    <property type="entry name" value="RNaseHI"/>
</dbReference>
<dbReference type="NCBIfam" id="NF001236">
    <property type="entry name" value="PRK00203.1"/>
    <property type="match status" value="1"/>
</dbReference>
<dbReference type="PANTHER" id="PTHR10642">
    <property type="entry name" value="RIBONUCLEASE H1"/>
    <property type="match status" value="1"/>
</dbReference>
<dbReference type="PANTHER" id="PTHR10642:SF26">
    <property type="entry name" value="RIBONUCLEASE H1"/>
    <property type="match status" value="1"/>
</dbReference>
<dbReference type="Pfam" id="PF00075">
    <property type="entry name" value="RNase_H"/>
    <property type="match status" value="1"/>
</dbReference>
<dbReference type="SUPFAM" id="SSF53098">
    <property type="entry name" value="Ribonuclease H-like"/>
    <property type="match status" value="1"/>
</dbReference>
<dbReference type="PROSITE" id="PS50879">
    <property type="entry name" value="RNASE_H_1"/>
    <property type="match status" value="1"/>
</dbReference>
<feature type="chain" id="PRO_0000332679" description="Ribonuclease H">
    <location>
        <begin position="1"/>
        <end position="147"/>
    </location>
</feature>
<feature type="domain" description="RNase H type-1" evidence="2">
    <location>
        <begin position="5"/>
        <end position="141"/>
    </location>
</feature>
<feature type="binding site" evidence="1">
    <location>
        <position position="14"/>
    </location>
    <ligand>
        <name>Mg(2+)</name>
        <dbReference type="ChEBI" id="CHEBI:18420"/>
        <label>1</label>
    </ligand>
</feature>
<feature type="binding site" evidence="1">
    <location>
        <position position="14"/>
    </location>
    <ligand>
        <name>Mg(2+)</name>
        <dbReference type="ChEBI" id="CHEBI:18420"/>
        <label>2</label>
    </ligand>
</feature>
<feature type="binding site" evidence="1">
    <location>
        <position position="52"/>
    </location>
    <ligand>
        <name>Mg(2+)</name>
        <dbReference type="ChEBI" id="CHEBI:18420"/>
        <label>1</label>
    </ligand>
</feature>
<feature type="binding site" evidence="1">
    <location>
        <position position="74"/>
    </location>
    <ligand>
        <name>Mg(2+)</name>
        <dbReference type="ChEBI" id="CHEBI:18420"/>
        <label>1</label>
    </ligand>
</feature>
<feature type="binding site" evidence="1">
    <location>
        <position position="133"/>
    </location>
    <ligand>
        <name>Mg(2+)</name>
        <dbReference type="ChEBI" id="CHEBI:18420"/>
        <label>2</label>
    </ligand>
</feature>
<protein>
    <recommendedName>
        <fullName evidence="1">Ribonuclease H</fullName>
        <shortName evidence="1">RNase H</shortName>
        <ecNumber evidence="1">3.1.26.4</ecNumber>
    </recommendedName>
</protein>
<proteinExistence type="inferred from homology"/>
<evidence type="ECO:0000255" key="1">
    <source>
        <dbReference type="HAMAP-Rule" id="MF_00042"/>
    </source>
</evidence>
<evidence type="ECO:0000255" key="2">
    <source>
        <dbReference type="PROSITE-ProRule" id="PRU00408"/>
    </source>
</evidence>
<organism>
    <name type="scientific">Sulfurovum sp. (strain NBC37-1)</name>
    <dbReference type="NCBI Taxonomy" id="387093"/>
    <lineage>
        <taxon>Bacteria</taxon>
        <taxon>Pseudomonadati</taxon>
        <taxon>Campylobacterota</taxon>
        <taxon>Epsilonproteobacteria</taxon>
        <taxon>Campylobacterales</taxon>
        <taxon>Sulfurovaceae</taxon>
        <taxon>Sulfurovum</taxon>
    </lineage>
</organism>
<reference key="1">
    <citation type="journal article" date="2007" name="Proc. Natl. Acad. Sci. U.S.A.">
        <title>Deep-sea vent epsilon-proteobacterial genomes provide insights into emergence of pathogens.</title>
        <authorList>
            <person name="Nakagawa S."/>
            <person name="Takaki Y."/>
            <person name="Shimamura S."/>
            <person name="Reysenbach A.-L."/>
            <person name="Takai K."/>
            <person name="Horikoshi K."/>
        </authorList>
    </citation>
    <scope>NUCLEOTIDE SEQUENCE [LARGE SCALE GENOMIC DNA]</scope>
    <source>
        <strain>NBC37-1</strain>
    </source>
</reference>
<accession>A6QCI9</accession>
<name>RNH_SULNB</name>
<sequence length="147" mass="16672">MQKQARKQITLYSDGSSLGNPGPGGYGGILEYKGSRKEYFGGEEETTNNRMELRGVIEGLKLLKEPCDVEVVSDSSYVVKAINEWLESWIRRDFKKVKNVDLWKAYIEAAAPHHVHGTWVRGHDGHPENERCDELARNEAERIKASL</sequence>
<gene>
    <name evidence="1" type="primary">rnhA</name>
    <name type="ordered locus">SUN_2258</name>
</gene>